<dbReference type="EMBL" id="AE016825">
    <property type="protein sequence ID" value="AAQ59252.1"/>
    <property type="molecule type" value="Genomic_DNA"/>
</dbReference>
<dbReference type="RefSeq" id="WP_011135128.1">
    <property type="nucleotide sequence ID" value="NC_005085.1"/>
</dbReference>
<dbReference type="SMR" id="Q7NXQ0"/>
<dbReference type="STRING" id="243365.CV_1576"/>
<dbReference type="KEGG" id="cvi:CV_1576"/>
<dbReference type="eggNOG" id="COG1492">
    <property type="taxonomic scope" value="Bacteria"/>
</dbReference>
<dbReference type="HOGENOM" id="CLU_019250_2_2_4"/>
<dbReference type="OrthoDB" id="9808302at2"/>
<dbReference type="UniPathway" id="UPA00148"/>
<dbReference type="Proteomes" id="UP000001424">
    <property type="component" value="Chromosome"/>
</dbReference>
<dbReference type="GO" id="GO:0015420">
    <property type="term" value="F:ABC-type vitamin B12 transporter activity"/>
    <property type="evidence" value="ECO:0007669"/>
    <property type="project" value="UniProtKB-UniRule"/>
</dbReference>
<dbReference type="GO" id="GO:0003824">
    <property type="term" value="F:catalytic activity"/>
    <property type="evidence" value="ECO:0007669"/>
    <property type="project" value="InterPro"/>
</dbReference>
<dbReference type="GO" id="GO:0009236">
    <property type="term" value="P:cobalamin biosynthetic process"/>
    <property type="evidence" value="ECO:0007669"/>
    <property type="project" value="UniProtKB-UniRule"/>
</dbReference>
<dbReference type="CDD" id="cd05389">
    <property type="entry name" value="CobQ_N"/>
    <property type="match status" value="1"/>
</dbReference>
<dbReference type="CDD" id="cd01750">
    <property type="entry name" value="GATase1_CobQ"/>
    <property type="match status" value="1"/>
</dbReference>
<dbReference type="Gene3D" id="3.40.50.880">
    <property type="match status" value="1"/>
</dbReference>
<dbReference type="Gene3D" id="3.40.50.300">
    <property type="entry name" value="P-loop containing nucleotide triphosphate hydrolases"/>
    <property type="match status" value="1"/>
</dbReference>
<dbReference type="HAMAP" id="MF_00028">
    <property type="entry name" value="CobQ"/>
    <property type="match status" value="1"/>
</dbReference>
<dbReference type="InterPro" id="IPR029062">
    <property type="entry name" value="Class_I_gatase-like"/>
</dbReference>
<dbReference type="InterPro" id="IPR002586">
    <property type="entry name" value="CobQ/CobB/MinD/ParA_Nub-bd_dom"/>
</dbReference>
<dbReference type="InterPro" id="IPR033949">
    <property type="entry name" value="CobQ_GATase1"/>
</dbReference>
<dbReference type="InterPro" id="IPR047045">
    <property type="entry name" value="CobQ_N"/>
</dbReference>
<dbReference type="InterPro" id="IPR004459">
    <property type="entry name" value="CobQ_synth"/>
</dbReference>
<dbReference type="InterPro" id="IPR011698">
    <property type="entry name" value="GATase_3"/>
</dbReference>
<dbReference type="InterPro" id="IPR027417">
    <property type="entry name" value="P-loop_NTPase"/>
</dbReference>
<dbReference type="NCBIfam" id="TIGR00313">
    <property type="entry name" value="cobQ"/>
    <property type="match status" value="1"/>
</dbReference>
<dbReference type="NCBIfam" id="NF001989">
    <property type="entry name" value="PRK00784.1"/>
    <property type="match status" value="1"/>
</dbReference>
<dbReference type="PANTHER" id="PTHR21343:SF1">
    <property type="entry name" value="COBYRIC ACID SYNTHASE"/>
    <property type="match status" value="1"/>
</dbReference>
<dbReference type="PANTHER" id="PTHR21343">
    <property type="entry name" value="DETHIOBIOTIN SYNTHETASE"/>
    <property type="match status" value="1"/>
</dbReference>
<dbReference type="Pfam" id="PF01656">
    <property type="entry name" value="CbiA"/>
    <property type="match status" value="1"/>
</dbReference>
<dbReference type="Pfam" id="PF07685">
    <property type="entry name" value="GATase_3"/>
    <property type="match status" value="1"/>
</dbReference>
<dbReference type="SUPFAM" id="SSF52317">
    <property type="entry name" value="Class I glutamine amidotransferase-like"/>
    <property type="match status" value="1"/>
</dbReference>
<dbReference type="SUPFAM" id="SSF52540">
    <property type="entry name" value="P-loop containing nucleoside triphosphate hydrolases"/>
    <property type="match status" value="1"/>
</dbReference>
<dbReference type="PROSITE" id="PS51274">
    <property type="entry name" value="GATASE_COBBQ"/>
    <property type="match status" value="1"/>
</dbReference>
<name>COBQ_CHRVO</name>
<evidence type="ECO:0000255" key="1">
    <source>
        <dbReference type="HAMAP-Rule" id="MF_00028"/>
    </source>
</evidence>
<feature type="chain" id="PRO_0000141295" description="Cobyric acid synthase">
    <location>
        <begin position="1"/>
        <end position="490"/>
    </location>
</feature>
<feature type="domain" description="GATase cobBQ-type" evidence="1">
    <location>
        <begin position="253"/>
        <end position="440"/>
    </location>
</feature>
<feature type="active site" description="Nucleophile" evidence="1">
    <location>
        <position position="334"/>
    </location>
</feature>
<feature type="active site" evidence="1">
    <location>
        <position position="432"/>
    </location>
</feature>
<reference key="1">
    <citation type="journal article" date="2003" name="Proc. Natl. Acad. Sci. U.S.A.">
        <title>The complete genome sequence of Chromobacterium violaceum reveals remarkable and exploitable bacterial adaptability.</title>
        <authorList>
            <person name="Vasconcelos A.T.R."/>
            <person name="de Almeida D.F."/>
            <person name="Hungria M."/>
            <person name="Guimaraes C.T."/>
            <person name="Antonio R.V."/>
            <person name="Almeida F.C."/>
            <person name="de Almeida L.G.P."/>
            <person name="de Almeida R."/>
            <person name="Alves-Gomes J.A."/>
            <person name="Andrade E.M."/>
            <person name="Araripe J."/>
            <person name="de Araujo M.F.F."/>
            <person name="Astolfi-Filho S."/>
            <person name="Azevedo V."/>
            <person name="Baptista A.J."/>
            <person name="Bataus L.A.M."/>
            <person name="Batista J.S."/>
            <person name="Belo A."/>
            <person name="van den Berg C."/>
            <person name="Bogo M."/>
            <person name="Bonatto S."/>
            <person name="Bordignon J."/>
            <person name="Brigido M.M."/>
            <person name="Brito C.A."/>
            <person name="Brocchi M."/>
            <person name="Burity H.A."/>
            <person name="Camargo A.A."/>
            <person name="Cardoso D.D.P."/>
            <person name="Carneiro N.P."/>
            <person name="Carraro D.M."/>
            <person name="Carvalho C.M.B."/>
            <person name="Cascardo J.C.M."/>
            <person name="Cavada B.S."/>
            <person name="Chueire L.M.O."/>
            <person name="Creczynski-Pasa T.B."/>
            <person name="Cunha-Junior N.C."/>
            <person name="Fagundes N."/>
            <person name="Falcao C.L."/>
            <person name="Fantinatti F."/>
            <person name="Farias I.P."/>
            <person name="Felipe M.S.S."/>
            <person name="Ferrari L.P."/>
            <person name="Ferro J.A."/>
            <person name="Ferro M.I.T."/>
            <person name="Franco G.R."/>
            <person name="Freitas N.S.A."/>
            <person name="Furlan L.R."/>
            <person name="Gazzinelli R.T."/>
            <person name="Gomes E.A."/>
            <person name="Goncalves P.R."/>
            <person name="Grangeiro T.B."/>
            <person name="Grattapaglia D."/>
            <person name="Grisard E.C."/>
            <person name="Hanna E.S."/>
            <person name="Jardim S.N."/>
            <person name="Laurino J."/>
            <person name="Leoi L.C.T."/>
            <person name="Lima L.F.A."/>
            <person name="Loureiro M.F."/>
            <person name="Lyra M.C.C.P."/>
            <person name="Madeira H.M.F."/>
            <person name="Manfio G.P."/>
            <person name="Maranhao A.Q."/>
            <person name="Martins W.S."/>
            <person name="di Mauro S.M.Z."/>
            <person name="de Medeiros S.R.B."/>
            <person name="Meissner R.V."/>
            <person name="Moreira M.A.M."/>
            <person name="Nascimento F.F."/>
            <person name="Nicolas M.F."/>
            <person name="Oliveira J.G."/>
            <person name="Oliveira S.C."/>
            <person name="Paixao R.F.C."/>
            <person name="Parente J.A."/>
            <person name="Pedrosa F.O."/>
            <person name="Pena S.D.J."/>
            <person name="Pereira J.O."/>
            <person name="Pereira M."/>
            <person name="Pinto L.S.R.C."/>
            <person name="Pinto L.S."/>
            <person name="Porto J.I.R."/>
            <person name="Potrich D.P."/>
            <person name="Ramalho-Neto C.E."/>
            <person name="Reis A.M.M."/>
            <person name="Rigo L.U."/>
            <person name="Rondinelli E."/>
            <person name="Santos E.B.P."/>
            <person name="Santos F.R."/>
            <person name="Schneider M.P.C."/>
            <person name="Seuanez H.N."/>
            <person name="Silva A.M.R."/>
            <person name="da Silva A.L.C."/>
            <person name="Silva D.W."/>
            <person name="Silva R."/>
            <person name="Simoes I.C."/>
            <person name="Simon D."/>
            <person name="Soares C.M.A."/>
            <person name="Soares R.B.A."/>
            <person name="Souza E.M."/>
            <person name="Souza K.R.L."/>
            <person name="Souza R.C."/>
            <person name="Steffens M.B.R."/>
            <person name="Steindel M."/>
            <person name="Teixeira S.R."/>
            <person name="Urmenyi T."/>
            <person name="Vettore A."/>
            <person name="Wassem R."/>
            <person name="Zaha A."/>
            <person name="Simpson A.J.G."/>
        </authorList>
    </citation>
    <scope>NUCLEOTIDE SEQUENCE [LARGE SCALE GENOMIC DNA]</scope>
    <source>
        <strain>ATCC 12472 / DSM 30191 / JCM 1249 / CCUG 213 / NBRC 12614 / NCIMB 9131 / NCTC 9757 / MK</strain>
    </source>
</reference>
<sequence>MSAKTIMIQGATSDAGKSALATGLCRLLARRGVKVAPFKPQNMALNSAVTADGGEIGRSQAVQAQACGVEPHTDMNPVLLKPNSHTGSQVIIQGRAIGNMEARGYHGYKPVAMKAVLASHARLAAQYQCIVAEGAGSPAEINLRDGDIANMGFAEAVDCPVILVADIERGGVFAHLAGTLALLSESERARVVGLVINRFRGDPSLLKTGVDWLERHTGKPVLGVLPYLYDLHLEAEDSMGLDKPGGAVGGGDKLRVAAPAAPRVSNHTDFDPLRLHPQVEFTLVRAGQAIPPADLIVLPGSKNVLADLAWLRAQGWDEALRRHLRYGGKVLGICGGLQMLGKKLHDPDGLEGEPGSGDGLGWLDMETTLAPEKRLTRMRGRLTLGDAEAAGYEIHMGVSQGPALARPAVRFDDGSADGARSEDDQIFATYLHGVFDEPAACQAILRWAGLKEPEALDYPALREANIDKLADMLERHLDLEPIRRWLPETR</sequence>
<protein>
    <recommendedName>
        <fullName evidence="1">Cobyric acid synthase</fullName>
    </recommendedName>
</protein>
<proteinExistence type="inferred from homology"/>
<gene>
    <name evidence="1" type="primary">cobQ</name>
    <name type="ordered locus">CV_1576</name>
</gene>
<organism>
    <name type="scientific">Chromobacterium violaceum (strain ATCC 12472 / DSM 30191 / JCM 1249 / CCUG 213 / NBRC 12614 / NCIMB 9131 / NCTC 9757 / MK)</name>
    <dbReference type="NCBI Taxonomy" id="243365"/>
    <lineage>
        <taxon>Bacteria</taxon>
        <taxon>Pseudomonadati</taxon>
        <taxon>Pseudomonadota</taxon>
        <taxon>Betaproteobacteria</taxon>
        <taxon>Neisseriales</taxon>
        <taxon>Chromobacteriaceae</taxon>
        <taxon>Chromobacterium</taxon>
    </lineage>
</organism>
<comment type="function">
    <text evidence="1">Catalyzes amidations at positions B, D, E, and G on adenosylcobyrinic A,C-diamide. NH(2) groups are provided by glutamine, and one molecule of ATP is hydrogenolyzed for each amidation.</text>
</comment>
<comment type="pathway">
    <text evidence="1">Cofactor biosynthesis; adenosylcobalamin biosynthesis.</text>
</comment>
<comment type="similarity">
    <text evidence="1">Belongs to the CobB/CobQ family. CobQ subfamily.</text>
</comment>
<accession>Q7NXQ0</accession>
<keyword id="KW-0169">Cobalamin biosynthesis</keyword>
<keyword id="KW-0315">Glutamine amidotransferase</keyword>
<keyword id="KW-1185">Reference proteome</keyword>